<name>TFR2_RAT</name>
<gene>
    <name type="primary">Tfr2</name>
    <name type="synonym">Trfr2</name>
</gene>
<comment type="function">
    <text evidence="1">Mediates cellular uptake of transferrin-bound iron in a non-iron dependent manner. May be involved in iron metabolism, hepatocyte function and erythrocyte differentiation (By similarity).</text>
</comment>
<comment type="subunit">
    <text evidence="1">Homodimer.</text>
</comment>
<comment type="subcellular location">
    <subcellularLocation>
        <location evidence="1">Cell membrane</location>
        <topology evidence="1">Single-pass type II membrane protein</topology>
    </subcellularLocation>
</comment>
<comment type="similarity">
    <text evidence="4">Belongs to the peptidase M28 family. M28B subfamily.</text>
</comment>
<sequence length="798" mass="88328">MEQRWGLLRKVQQWSPRPSQTIYRRVEGPQLENLEEEDREEGEELPAQFCPMELKGPERLGSCPGRSIPIPWAAAGRKAAPYLVLTTLLIFTGAFLLGYVAFRGSCQACGDSVLVVGEDVNSEDSSRGTLYWSDLQDMFLRFLGEGRMEDTIRLTSLRERVAGSARMATLVQDILDKLSRQKLDHVWTDTHYVGLQFPDPAHPNTLHWVGADGSVQEQLPLEDPEVYCPYSATGNATGKLVYAHYGRREDLQDLKAKDVELAGSLLLVRAGITSFAQKVAIAQDFGAHGVLIYPDPADFSQDPHKPGLSSDRAVYGHVHLGTGDPYTPGFPSFNQTQFPPVESSGLPNIPAQPISADVADRLLRKLTGPVAPQEWKGRLSDSPYRLGPGPGLRLVVNNHRTSTPISNIFACIEGFAEPDHYVVIGAQRDAWGPGAAKSAVGTAILLELVRTFSSMVSSGFRPRRSLLFISWDGGDFGSVGATEWLEGYLSVLHLKAVVYVSLDNSVLGDGKFHAKTSPLLVSLIENILKQVDSPNHSGQTLYDQVAFTHPSWDAEVIQPLPMDSSAYSFTAFAGVPAVEFSFMEDDRVYPFLHTKEDTYENLHKMLRGRLPAVVLAVAQLAGQLLIRLSHDHLLPLDFGRYGDVVLRHIGNLNEFSGDLKARGLTLQWVYSARGDYIRAAEKLRKEIYSSEQSDERLMRMYNVRIMRVEFYFLSQYVSPADSPFRHIFLGQGDHTLGALVEHLRMLRSDGSGAASSGLSPGLGFQESRFRRQLALLTWTLQGAANALSGDVWNIDNNF</sequence>
<dbReference type="EMBL" id="CH473973">
    <property type="protein sequence ID" value="EDM13257.1"/>
    <property type="molecule type" value="Genomic_DNA"/>
</dbReference>
<dbReference type="EMBL" id="CH473973">
    <property type="protein sequence ID" value="EDM13258.1"/>
    <property type="molecule type" value="Genomic_DNA"/>
</dbReference>
<dbReference type="EMBL" id="CH473973">
    <property type="protein sequence ID" value="EDM13259.1"/>
    <property type="molecule type" value="Genomic_DNA"/>
</dbReference>
<dbReference type="EMBL" id="BC166451">
    <property type="protein sequence ID" value="AAI66451.1"/>
    <property type="molecule type" value="mRNA"/>
</dbReference>
<dbReference type="RefSeq" id="NP_001099386.1">
    <property type="nucleotide sequence ID" value="NM_001105916.1"/>
</dbReference>
<dbReference type="RefSeq" id="XP_006249179.1">
    <property type="nucleotide sequence ID" value="XM_006249117.4"/>
</dbReference>
<dbReference type="RefSeq" id="XP_006249180.1">
    <property type="nucleotide sequence ID" value="XM_006249118.2"/>
</dbReference>
<dbReference type="RefSeq" id="XP_008767347.1">
    <property type="nucleotide sequence ID" value="XM_008769125.4"/>
</dbReference>
<dbReference type="RefSeq" id="XP_008767348.1">
    <property type="nucleotide sequence ID" value="XM_008769126.1"/>
</dbReference>
<dbReference type="SMR" id="B2GUY2"/>
<dbReference type="FunCoup" id="B2GUY2">
    <property type="interactions" value="153"/>
</dbReference>
<dbReference type="IntAct" id="B2GUY2">
    <property type="interactions" value="1"/>
</dbReference>
<dbReference type="STRING" id="10116.ENSRNOP00000072585"/>
<dbReference type="MEROPS" id="M28.973"/>
<dbReference type="GlyCosmos" id="B2GUY2">
    <property type="glycosylation" value="3 sites, No reported glycans"/>
</dbReference>
<dbReference type="GlyGen" id="B2GUY2">
    <property type="glycosylation" value="3 sites"/>
</dbReference>
<dbReference type="PhosphoSitePlus" id="B2GUY2"/>
<dbReference type="PaxDb" id="10116-ENSRNOP00000001905"/>
<dbReference type="PeptideAtlas" id="B2GUY2"/>
<dbReference type="Ensembl" id="ENSRNOT00000001905.7">
    <property type="protein sequence ID" value="ENSRNOP00000001905.4"/>
    <property type="gene ID" value="ENSRNOG00000001407.8"/>
</dbReference>
<dbReference type="GeneID" id="288562"/>
<dbReference type="KEGG" id="rno:288562"/>
<dbReference type="UCSC" id="RGD:1310152">
    <property type="organism name" value="rat"/>
</dbReference>
<dbReference type="AGR" id="RGD:1310152"/>
<dbReference type="CTD" id="7036"/>
<dbReference type="RGD" id="1310152">
    <property type="gene designation" value="Tfr2"/>
</dbReference>
<dbReference type="eggNOG" id="KOG2195">
    <property type="taxonomic scope" value="Eukaryota"/>
</dbReference>
<dbReference type="GeneTree" id="ENSGT01030000234598"/>
<dbReference type="HOGENOM" id="CLU_005688_5_0_1"/>
<dbReference type="InParanoid" id="B2GUY2"/>
<dbReference type="OMA" id="QVVFNNH"/>
<dbReference type="PhylomeDB" id="B2GUY2"/>
<dbReference type="TreeFam" id="TF312981"/>
<dbReference type="Reactome" id="R-RNO-917977">
    <property type="pathway name" value="Transferrin endocytosis and recycling"/>
</dbReference>
<dbReference type="PRO" id="PR:B2GUY2"/>
<dbReference type="Proteomes" id="UP000002494">
    <property type="component" value="Chromosome 12"/>
</dbReference>
<dbReference type="Proteomes" id="UP000234681">
    <property type="component" value="Chromosome 12"/>
</dbReference>
<dbReference type="Bgee" id="ENSRNOG00000001407">
    <property type="expression patterns" value="Expressed in liver and 8 other cell types or tissues"/>
</dbReference>
<dbReference type="GO" id="GO:0031410">
    <property type="term" value="C:cytoplasmic vesicle"/>
    <property type="evidence" value="ECO:0000266"/>
    <property type="project" value="RGD"/>
</dbReference>
<dbReference type="GO" id="GO:0009897">
    <property type="term" value="C:external side of plasma membrane"/>
    <property type="evidence" value="ECO:0000266"/>
    <property type="project" value="RGD"/>
</dbReference>
<dbReference type="GO" id="GO:1990712">
    <property type="term" value="C:HFE-transferrin receptor complex"/>
    <property type="evidence" value="ECO:0000266"/>
    <property type="project" value="RGD"/>
</dbReference>
<dbReference type="GO" id="GO:0005886">
    <property type="term" value="C:plasma membrane"/>
    <property type="evidence" value="ECO:0000266"/>
    <property type="project" value="RGD"/>
</dbReference>
<dbReference type="GO" id="GO:0039706">
    <property type="term" value="F:co-receptor binding"/>
    <property type="evidence" value="ECO:0000266"/>
    <property type="project" value="RGD"/>
</dbReference>
<dbReference type="GO" id="GO:0004998">
    <property type="term" value="F:transferrin receptor activity"/>
    <property type="evidence" value="ECO:0000266"/>
    <property type="project" value="RGD"/>
</dbReference>
<dbReference type="GO" id="GO:0006953">
    <property type="term" value="P:acute-phase response"/>
    <property type="evidence" value="ECO:0000270"/>
    <property type="project" value="RGD"/>
</dbReference>
<dbReference type="GO" id="GO:0071281">
    <property type="term" value="P:cellular response to iron ion"/>
    <property type="evidence" value="ECO:0000266"/>
    <property type="project" value="RGD"/>
</dbReference>
<dbReference type="GO" id="GO:0140298">
    <property type="term" value="P:endocytic iron import into cell"/>
    <property type="evidence" value="ECO:0000266"/>
    <property type="project" value="RGD"/>
</dbReference>
<dbReference type="GO" id="GO:0006879">
    <property type="term" value="P:intracellular iron ion homeostasis"/>
    <property type="evidence" value="ECO:0000266"/>
    <property type="project" value="RGD"/>
</dbReference>
<dbReference type="GO" id="GO:0060586">
    <property type="term" value="P:multicellular organismal-level iron ion homeostasis"/>
    <property type="evidence" value="ECO:0000266"/>
    <property type="project" value="RGD"/>
</dbReference>
<dbReference type="GO" id="GO:0045807">
    <property type="term" value="P:positive regulation of endocytosis"/>
    <property type="evidence" value="ECO:0000266"/>
    <property type="project" value="RGD"/>
</dbReference>
<dbReference type="GO" id="GO:0090277">
    <property type="term" value="P:positive regulation of peptide hormone secretion"/>
    <property type="evidence" value="ECO:0000266"/>
    <property type="project" value="RGD"/>
</dbReference>
<dbReference type="GO" id="GO:1903319">
    <property type="term" value="P:positive regulation of protein maturation"/>
    <property type="evidence" value="ECO:0000266"/>
    <property type="project" value="RGD"/>
</dbReference>
<dbReference type="GO" id="GO:0045944">
    <property type="term" value="P:positive regulation of transcription by RNA polymerase II"/>
    <property type="evidence" value="ECO:0000266"/>
    <property type="project" value="RGD"/>
</dbReference>
<dbReference type="GO" id="GO:0006898">
    <property type="term" value="P:receptor-mediated endocytosis"/>
    <property type="evidence" value="ECO:0000266"/>
    <property type="project" value="RGD"/>
</dbReference>
<dbReference type="GO" id="GO:0010039">
    <property type="term" value="P:response to iron ion"/>
    <property type="evidence" value="ECO:0000266"/>
    <property type="project" value="RGD"/>
</dbReference>
<dbReference type="GO" id="GO:0033572">
    <property type="term" value="P:transferrin transport"/>
    <property type="evidence" value="ECO:0000266"/>
    <property type="project" value="RGD"/>
</dbReference>
<dbReference type="CDD" id="cd09848">
    <property type="entry name" value="M28_TfR"/>
    <property type="match status" value="1"/>
</dbReference>
<dbReference type="CDD" id="cd02128">
    <property type="entry name" value="PA_TfR"/>
    <property type="match status" value="1"/>
</dbReference>
<dbReference type="FunFam" id="1.20.930.40:FF:000002">
    <property type="entry name" value="Transferrin receptor protein 1"/>
    <property type="match status" value="1"/>
</dbReference>
<dbReference type="FunFam" id="3.50.30.30:FF:000010">
    <property type="entry name" value="Transferrin receptor protein 1"/>
    <property type="match status" value="1"/>
</dbReference>
<dbReference type="FunFam" id="3.40.630.10:FF:000046">
    <property type="entry name" value="transferrin receptor protein 2 isoform X1"/>
    <property type="match status" value="1"/>
</dbReference>
<dbReference type="Gene3D" id="3.50.30.30">
    <property type="match status" value="1"/>
</dbReference>
<dbReference type="Gene3D" id="1.20.930.40">
    <property type="entry name" value="Transferrin receptor-like, dimerisation domain"/>
    <property type="match status" value="1"/>
</dbReference>
<dbReference type="Gene3D" id="3.40.630.10">
    <property type="entry name" value="Zn peptidases"/>
    <property type="match status" value="1"/>
</dbReference>
<dbReference type="InterPro" id="IPR046450">
    <property type="entry name" value="PA_dom_sf"/>
</dbReference>
<dbReference type="InterPro" id="IPR003137">
    <property type="entry name" value="PA_domain"/>
</dbReference>
<dbReference type="InterPro" id="IPR007484">
    <property type="entry name" value="Peptidase_M28"/>
</dbReference>
<dbReference type="InterPro" id="IPR039373">
    <property type="entry name" value="Peptidase_M28B"/>
</dbReference>
<dbReference type="InterPro" id="IPR036757">
    <property type="entry name" value="TFR-like_dimer_dom_sf"/>
</dbReference>
<dbReference type="InterPro" id="IPR037324">
    <property type="entry name" value="TfR1/2_PA"/>
</dbReference>
<dbReference type="PANTHER" id="PTHR10404">
    <property type="entry name" value="N-ACETYLATED-ALPHA-LINKED ACIDIC DIPEPTIDASE"/>
    <property type="match status" value="1"/>
</dbReference>
<dbReference type="PANTHER" id="PTHR10404:SF33">
    <property type="entry name" value="TRANSFERRIN RECEPTOR PROTEIN 2"/>
    <property type="match status" value="1"/>
</dbReference>
<dbReference type="Pfam" id="PF02225">
    <property type="entry name" value="PA"/>
    <property type="match status" value="1"/>
</dbReference>
<dbReference type="Pfam" id="PF04389">
    <property type="entry name" value="Peptidase_M28"/>
    <property type="match status" value="1"/>
</dbReference>
<dbReference type="SUPFAM" id="SSF52025">
    <property type="entry name" value="PA domain"/>
    <property type="match status" value="1"/>
</dbReference>
<dbReference type="SUPFAM" id="SSF47672">
    <property type="entry name" value="Transferrin receptor-like dimerisation domain"/>
    <property type="match status" value="1"/>
</dbReference>
<dbReference type="SUPFAM" id="SSF53187">
    <property type="entry name" value="Zn-dependent exopeptidases"/>
    <property type="match status" value="1"/>
</dbReference>
<proteinExistence type="evidence at transcript level"/>
<keyword id="KW-1003">Cell membrane</keyword>
<keyword id="KW-1015">Disulfide bond</keyword>
<keyword id="KW-0325">Glycoprotein</keyword>
<keyword id="KW-0472">Membrane</keyword>
<keyword id="KW-0675">Receptor</keyword>
<keyword id="KW-1185">Reference proteome</keyword>
<keyword id="KW-0735">Signal-anchor</keyword>
<keyword id="KW-0812">Transmembrane</keyword>
<keyword id="KW-1133">Transmembrane helix</keyword>
<organism>
    <name type="scientific">Rattus norvegicus</name>
    <name type="common">Rat</name>
    <dbReference type="NCBI Taxonomy" id="10116"/>
    <lineage>
        <taxon>Eukaryota</taxon>
        <taxon>Metazoa</taxon>
        <taxon>Chordata</taxon>
        <taxon>Craniata</taxon>
        <taxon>Vertebrata</taxon>
        <taxon>Euteleostomi</taxon>
        <taxon>Mammalia</taxon>
        <taxon>Eutheria</taxon>
        <taxon>Euarchontoglires</taxon>
        <taxon>Glires</taxon>
        <taxon>Rodentia</taxon>
        <taxon>Myomorpha</taxon>
        <taxon>Muroidea</taxon>
        <taxon>Muridae</taxon>
        <taxon>Murinae</taxon>
        <taxon>Rattus</taxon>
    </lineage>
</organism>
<accession>B2GUY2</accession>
<feature type="chain" id="PRO_0000348233" description="Transferrin receptor protein 2">
    <location>
        <begin position="1"/>
        <end position="798"/>
    </location>
</feature>
<feature type="topological domain" description="Cytoplasmic" evidence="2">
    <location>
        <begin position="1"/>
        <end position="81"/>
    </location>
</feature>
<feature type="transmembrane region" description="Helical; Signal-anchor for type II membrane protein" evidence="2">
    <location>
        <begin position="82"/>
        <end position="102"/>
    </location>
</feature>
<feature type="topological domain" description="Extracellular" evidence="2">
    <location>
        <begin position="103"/>
        <end position="798"/>
    </location>
</feature>
<feature type="region of interest" description="Disordered" evidence="3">
    <location>
        <begin position="25"/>
        <end position="44"/>
    </location>
</feature>
<feature type="short sequence motif" description="Endocytosis signal" evidence="2">
    <location>
        <begin position="23"/>
        <end position="26"/>
    </location>
</feature>
<feature type="compositionally biased region" description="Acidic residues" evidence="3">
    <location>
        <begin position="33"/>
        <end position="44"/>
    </location>
</feature>
<feature type="glycosylation site" description="N-linked (GlcNAc...) asparagine" evidence="2">
    <location>
        <position position="235"/>
    </location>
</feature>
<feature type="glycosylation site" description="N-linked (GlcNAc...) asparagine" evidence="2">
    <location>
        <position position="334"/>
    </location>
</feature>
<feature type="glycosylation site" description="N-linked (GlcNAc...) asparagine" evidence="2">
    <location>
        <position position="535"/>
    </location>
</feature>
<feature type="disulfide bond" description="Interchain" evidence="2">
    <location>
        <position position="106"/>
    </location>
</feature>
<feature type="disulfide bond" description="Interchain" evidence="2">
    <location>
        <position position="109"/>
    </location>
</feature>
<evidence type="ECO:0000250" key="1"/>
<evidence type="ECO:0000255" key="2"/>
<evidence type="ECO:0000256" key="3">
    <source>
        <dbReference type="SAM" id="MobiDB-lite"/>
    </source>
</evidence>
<evidence type="ECO:0000305" key="4"/>
<protein>
    <recommendedName>
        <fullName>Transferrin receptor protein 2</fullName>
        <shortName>TfR2</shortName>
    </recommendedName>
</protein>
<reference key="1">
    <citation type="submission" date="2005-07" db="EMBL/GenBank/DDBJ databases">
        <authorList>
            <person name="Mural R.J."/>
            <person name="Adams M.D."/>
            <person name="Myers E.W."/>
            <person name="Smith H.O."/>
            <person name="Venter J.C."/>
        </authorList>
    </citation>
    <scope>NUCLEOTIDE SEQUENCE [LARGE SCALE GENOMIC DNA]</scope>
    <source>
        <strain>Brown Norway</strain>
    </source>
</reference>
<reference key="2">
    <citation type="journal article" date="2004" name="Genome Res.">
        <title>The status, quality, and expansion of the NIH full-length cDNA project: the Mammalian Gene Collection (MGC).</title>
        <authorList>
            <consortium name="The MGC Project Team"/>
        </authorList>
    </citation>
    <scope>NUCLEOTIDE SEQUENCE [LARGE SCALE MRNA]</scope>
    <source>
        <tissue>Liver</tissue>
    </source>
</reference>